<reference key="1">
    <citation type="journal article" date="2007" name="Biochem. J.">
        <title>Identification, cloning, expression and functional characterization of an astacin-like metalloprotease toxin from Loxosceles intermedia (brown spider) venom.</title>
        <authorList>
            <person name="da Silveira R.B."/>
            <person name="Wille A.C.M."/>
            <person name="Chaim O.M."/>
            <person name="Appel M.H."/>
            <person name="Silva D.T."/>
            <person name="Franco C.R.C."/>
            <person name="Toma L."/>
            <person name="Mangili O.C."/>
            <person name="Gremski W."/>
            <person name="Dietrich C.P."/>
            <person name="Nader H.B."/>
            <person name="Veiga S.S."/>
        </authorList>
    </citation>
    <scope>NUCLEOTIDE SEQUENCE [MRNA]</scope>
    <scope>FUNCTION</scope>
    <scope>ACTIVITY REGULATION</scope>
    <scope>SUBUNIT</scope>
    <source>
        <tissue>Venom gland</tissue>
    </source>
</reference>
<sequence length="264" mass="30384">MIKYIGVFAFLVGGFCHDFETVISNQDPIVDGMRLVEGDMLFDDGPLFTERNAVKYDQQLWPNGEIVYEISPGLRQYEQIIREAMRTYEDNTCIKFRRRTNEADYVNIHVGDRCYSRVGKSFRGGPQPLSLGRGCTDFGTILHELGHSVGFDHEHSRADRDEFLIIHKENIKNGSEHNFDKLWENNTRTIGPFDYDSIMLYGAYAFSKDTRKFKTMEPVEPGLPMKSVIQKGKLSYYDIVKVNKLYKCPPVNPYPGGIRPYVNV</sequence>
<protein>
    <recommendedName>
        <fullName>Astacin-like metalloprotease toxin 1</fullName>
        <ecNumber>3.4.24.-</ecNumber>
    </recommendedName>
    <alternativeName>
        <fullName>Loxosceles astacin-like protease 1</fullName>
        <shortName>LALP</shortName>
        <shortName>LALP1</shortName>
    </alternativeName>
</protein>
<evidence type="ECO:0000250" key="1"/>
<evidence type="ECO:0000255" key="2"/>
<evidence type="ECO:0000255" key="3">
    <source>
        <dbReference type="PROSITE-ProRule" id="PRU01211"/>
    </source>
</evidence>
<evidence type="ECO:0000269" key="4">
    <source>
    </source>
</evidence>
<organism>
    <name type="scientific">Loxosceles intermedia</name>
    <name type="common">Brown spider</name>
    <dbReference type="NCBI Taxonomy" id="58218"/>
    <lineage>
        <taxon>Eukaryota</taxon>
        <taxon>Metazoa</taxon>
        <taxon>Ecdysozoa</taxon>
        <taxon>Arthropoda</taxon>
        <taxon>Chelicerata</taxon>
        <taxon>Arachnida</taxon>
        <taxon>Araneae</taxon>
        <taxon>Araneomorphae</taxon>
        <taxon>Haplogynae</taxon>
        <taxon>Scytodoidea</taxon>
        <taxon>Sicariidae</taxon>
        <taxon>Loxosceles</taxon>
    </lineage>
</organism>
<proteinExistence type="evidence at protein level"/>
<accession>A0FKN6</accession>
<feature type="signal peptide" evidence="2">
    <location>
        <begin position="1"/>
        <end position="16"/>
    </location>
</feature>
<feature type="propeptide" id="PRO_5000148896" evidence="1">
    <location>
        <begin position="17"/>
        <end position="51"/>
    </location>
</feature>
<feature type="chain" id="PRO_5000148897" description="Astacin-like metalloprotease toxin 1">
    <location>
        <begin position="52"/>
        <end position="264"/>
    </location>
</feature>
<feature type="domain" description="Peptidase M12A" evidence="3">
    <location>
        <begin position="52"/>
        <end position="249"/>
    </location>
</feature>
<feature type="active site" evidence="3">
    <location>
        <position position="144"/>
    </location>
</feature>
<feature type="binding site" evidence="3">
    <location>
        <position position="143"/>
    </location>
    <ligand>
        <name>Zn(2+)</name>
        <dbReference type="ChEBI" id="CHEBI:29105"/>
        <note>catalytic</note>
    </ligand>
</feature>
<feature type="binding site" evidence="3">
    <location>
        <position position="147"/>
    </location>
    <ligand>
        <name>Zn(2+)</name>
        <dbReference type="ChEBI" id="CHEBI:29105"/>
        <note>catalytic</note>
    </ligand>
</feature>
<feature type="binding site" evidence="3">
    <location>
        <position position="153"/>
    </location>
    <ligand>
        <name>Zn(2+)</name>
        <dbReference type="ChEBI" id="CHEBI:29105"/>
        <note>catalytic</note>
    </ligand>
</feature>
<feature type="glycosylation site" description="N-linked (GlcNAc...) asparagine" evidence="2">
    <location>
        <position position="173"/>
    </location>
</feature>
<feature type="glycosylation site" description="N-linked (GlcNAc...) asparagine" evidence="2">
    <location>
        <position position="185"/>
    </location>
</feature>
<feature type="disulfide bond" evidence="3">
    <location>
        <begin position="93"/>
        <end position="248"/>
    </location>
</feature>
<feature type="disulfide bond" evidence="3">
    <location>
        <begin position="114"/>
        <end position="135"/>
    </location>
</feature>
<keyword id="KW-1015">Disulfide bond</keyword>
<keyword id="KW-0325">Glycoprotein</keyword>
<keyword id="KW-0378">Hydrolase</keyword>
<keyword id="KW-0479">Metal-binding</keyword>
<keyword id="KW-0482">Metalloprotease</keyword>
<keyword id="KW-0645">Protease</keyword>
<keyword id="KW-0964">Secreted</keyword>
<keyword id="KW-0732">Signal</keyword>
<keyword id="KW-0800">Toxin</keyword>
<keyword id="KW-0862">Zinc</keyword>
<name>VMPA_LOXIN</name>
<dbReference type="EC" id="3.4.24.-"/>
<dbReference type="EMBL" id="EF028089">
    <property type="protein sequence ID" value="ABK20019.1"/>
    <property type="molecule type" value="mRNA"/>
</dbReference>
<dbReference type="SMR" id="A0FKN6"/>
<dbReference type="MEROPS" id="M12.333"/>
<dbReference type="ArachnoServer" id="AS000017">
    <property type="toxin name" value="Loxosceles astacin-like metalloprotease"/>
</dbReference>
<dbReference type="GO" id="GO:0005576">
    <property type="term" value="C:extracellular region"/>
    <property type="evidence" value="ECO:0007669"/>
    <property type="project" value="UniProtKB-SubCell"/>
</dbReference>
<dbReference type="GO" id="GO:0004222">
    <property type="term" value="F:metalloendopeptidase activity"/>
    <property type="evidence" value="ECO:0007669"/>
    <property type="project" value="InterPro"/>
</dbReference>
<dbReference type="GO" id="GO:0090729">
    <property type="term" value="F:toxin activity"/>
    <property type="evidence" value="ECO:0007669"/>
    <property type="project" value="UniProtKB-KW"/>
</dbReference>
<dbReference type="GO" id="GO:0008270">
    <property type="term" value="F:zinc ion binding"/>
    <property type="evidence" value="ECO:0007669"/>
    <property type="project" value="InterPro"/>
</dbReference>
<dbReference type="GO" id="GO:0006508">
    <property type="term" value="P:proteolysis"/>
    <property type="evidence" value="ECO:0007669"/>
    <property type="project" value="UniProtKB-KW"/>
</dbReference>
<dbReference type="CDD" id="cd04280">
    <property type="entry name" value="ZnMc_astacin_like"/>
    <property type="match status" value="1"/>
</dbReference>
<dbReference type="Gene3D" id="3.40.390.10">
    <property type="entry name" value="Collagenase (Catalytic Domain)"/>
    <property type="match status" value="1"/>
</dbReference>
<dbReference type="InterPro" id="IPR034035">
    <property type="entry name" value="Astacin-like_dom"/>
</dbReference>
<dbReference type="InterPro" id="IPR024079">
    <property type="entry name" value="MetalloPept_cat_dom_sf"/>
</dbReference>
<dbReference type="InterPro" id="IPR001506">
    <property type="entry name" value="Peptidase_M12A"/>
</dbReference>
<dbReference type="InterPro" id="IPR006026">
    <property type="entry name" value="Peptidase_Metallo"/>
</dbReference>
<dbReference type="PANTHER" id="PTHR10127">
    <property type="entry name" value="DISCOIDIN, CUB, EGF, LAMININ , AND ZINC METALLOPROTEASE DOMAIN CONTAINING"/>
    <property type="match status" value="1"/>
</dbReference>
<dbReference type="PANTHER" id="PTHR10127:SF850">
    <property type="entry name" value="METALLOENDOPEPTIDASE"/>
    <property type="match status" value="1"/>
</dbReference>
<dbReference type="Pfam" id="PF01400">
    <property type="entry name" value="Astacin"/>
    <property type="match status" value="1"/>
</dbReference>
<dbReference type="PRINTS" id="PR00480">
    <property type="entry name" value="ASTACIN"/>
</dbReference>
<dbReference type="SMART" id="SM00235">
    <property type="entry name" value="ZnMc"/>
    <property type="match status" value="1"/>
</dbReference>
<dbReference type="SUPFAM" id="SSF55486">
    <property type="entry name" value="Metalloproteases ('zincins'), catalytic domain"/>
    <property type="match status" value="1"/>
</dbReference>
<dbReference type="PROSITE" id="PS51864">
    <property type="entry name" value="ASTACIN"/>
    <property type="match status" value="1"/>
</dbReference>
<dbReference type="PROSITE" id="PS00142">
    <property type="entry name" value="ZINC_PROTEASE"/>
    <property type="match status" value="1"/>
</dbReference>
<comment type="function">
    <text evidence="4">Zinc metalloprotease. Provoques deadhesion of endothelial cells from cell cultures, and also degradation of fibronectin, fibrinogen and gelatin in vitro. Its role in the venom is not fully understood but it might act as a spreading factor that facilitates diffusion of other venom toxins. Alternatively, it might be involved in the proteolytic processing of other venom toxins or it might play a role in extra-oral digestion of prey.</text>
</comment>
<comment type="cofactor">
    <cofactor evidence="3">
        <name>Zn(2+)</name>
        <dbReference type="ChEBI" id="CHEBI:29105"/>
    </cofactor>
    <text evidence="3">Binds 1 zinc ion per subunit.</text>
</comment>
<comment type="activity regulation">
    <text evidence="4">Inhibited by 1,10-phenanthroline.</text>
</comment>
<comment type="subunit">
    <text evidence="4">Monomer.</text>
</comment>
<comment type="subcellular location">
    <subcellularLocation>
        <location evidence="1">Secreted</location>
    </subcellularLocation>
</comment>
<comment type="tissue specificity">
    <text>Expressed by the venom gland.</text>
</comment>